<reference key="1">
    <citation type="journal article" date="2001" name="Nature">
        <title>Genome sequence of Yersinia pestis, the causative agent of plague.</title>
        <authorList>
            <person name="Parkhill J."/>
            <person name="Wren B.W."/>
            <person name="Thomson N.R."/>
            <person name="Titball R.W."/>
            <person name="Holden M.T.G."/>
            <person name="Prentice M.B."/>
            <person name="Sebaihia M."/>
            <person name="James K.D."/>
            <person name="Churcher C.M."/>
            <person name="Mungall K.L."/>
            <person name="Baker S."/>
            <person name="Basham D."/>
            <person name="Bentley S.D."/>
            <person name="Brooks K."/>
            <person name="Cerdeno-Tarraga A.-M."/>
            <person name="Chillingworth T."/>
            <person name="Cronin A."/>
            <person name="Davies R.M."/>
            <person name="Davis P."/>
            <person name="Dougan G."/>
            <person name="Feltwell T."/>
            <person name="Hamlin N."/>
            <person name="Holroyd S."/>
            <person name="Jagels K."/>
            <person name="Karlyshev A.V."/>
            <person name="Leather S."/>
            <person name="Moule S."/>
            <person name="Oyston P.C.F."/>
            <person name="Quail M.A."/>
            <person name="Rutherford K.M."/>
            <person name="Simmonds M."/>
            <person name="Skelton J."/>
            <person name="Stevens K."/>
            <person name="Whitehead S."/>
            <person name="Barrell B.G."/>
        </authorList>
    </citation>
    <scope>NUCLEOTIDE SEQUENCE [LARGE SCALE GENOMIC DNA]</scope>
    <source>
        <strain>CO-92 / Biovar Orientalis</strain>
    </source>
</reference>
<reference key="2">
    <citation type="journal article" date="2002" name="J. Bacteriol.">
        <title>Genome sequence of Yersinia pestis KIM.</title>
        <authorList>
            <person name="Deng W."/>
            <person name="Burland V."/>
            <person name="Plunkett G. III"/>
            <person name="Boutin A."/>
            <person name="Mayhew G.F."/>
            <person name="Liss P."/>
            <person name="Perna N.T."/>
            <person name="Rose D.J."/>
            <person name="Mau B."/>
            <person name="Zhou S."/>
            <person name="Schwartz D.C."/>
            <person name="Fetherston J.D."/>
            <person name="Lindler L.E."/>
            <person name="Brubaker R.R."/>
            <person name="Plano G.V."/>
            <person name="Straley S.C."/>
            <person name="McDonough K.A."/>
            <person name="Nilles M.L."/>
            <person name="Matson J.S."/>
            <person name="Blattner F.R."/>
            <person name="Perry R.D."/>
        </authorList>
    </citation>
    <scope>NUCLEOTIDE SEQUENCE [LARGE SCALE GENOMIC DNA]</scope>
    <source>
        <strain>KIM10+ / Biovar Mediaevalis</strain>
    </source>
</reference>
<reference key="3">
    <citation type="journal article" date="2004" name="DNA Res.">
        <title>Complete genome sequence of Yersinia pestis strain 91001, an isolate avirulent to humans.</title>
        <authorList>
            <person name="Song Y."/>
            <person name="Tong Z."/>
            <person name="Wang J."/>
            <person name="Wang L."/>
            <person name="Guo Z."/>
            <person name="Han Y."/>
            <person name="Zhang J."/>
            <person name="Pei D."/>
            <person name="Zhou D."/>
            <person name="Qin H."/>
            <person name="Pang X."/>
            <person name="Han Y."/>
            <person name="Zhai J."/>
            <person name="Li M."/>
            <person name="Cui B."/>
            <person name="Qi Z."/>
            <person name="Jin L."/>
            <person name="Dai R."/>
            <person name="Chen F."/>
            <person name="Li S."/>
            <person name="Ye C."/>
            <person name="Du Z."/>
            <person name="Lin W."/>
            <person name="Wang J."/>
            <person name="Yu J."/>
            <person name="Yang H."/>
            <person name="Wang J."/>
            <person name="Huang P."/>
            <person name="Yang R."/>
        </authorList>
    </citation>
    <scope>NUCLEOTIDE SEQUENCE [LARGE SCALE GENOMIC DNA]</scope>
    <source>
        <strain>91001 / Biovar Mediaevalis</strain>
    </source>
</reference>
<evidence type="ECO:0000255" key="1">
    <source>
        <dbReference type="HAMAP-Rule" id="MF_01333"/>
    </source>
</evidence>
<evidence type="ECO:0000305" key="2"/>
<proteinExistence type="inferred from homology"/>
<sequence length="179" mass="20264">MAKLHDYYKDEVVKQLMSQFGYDSVMQVPRVEKITLNMGVGEAIADKKLLDNAAADLAAISGQKPFITKARKSVAGFKIRQGYPIGCKVTLRGERMWEFFERLITIAVPRIRDFRGLSAKSFDGRGNYSMGVREQIIFPEIDYDKVDRVRGLDITITTTAKSDDEGRALLAAFKFPFRK</sequence>
<feature type="chain" id="PRO_0000125033" description="Large ribosomal subunit protein uL5">
    <location>
        <begin position="1"/>
        <end position="179"/>
    </location>
</feature>
<keyword id="KW-1185">Reference proteome</keyword>
<keyword id="KW-0687">Ribonucleoprotein</keyword>
<keyword id="KW-0689">Ribosomal protein</keyword>
<keyword id="KW-0694">RNA-binding</keyword>
<keyword id="KW-0699">rRNA-binding</keyword>
<keyword id="KW-0820">tRNA-binding</keyword>
<protein>
    <recommendedName>
        <fullName evidence="1">Large ribosomal subunit protein uL5</fullName>
    </recommendedName>
    <alternativeName>
        <fullName evidence="2">50S ribosomal protein L5</fullName>
    </alternativeName>
</protein>
<dbReference type="EMBL" id="AL590842">
    <property type="protein sequence ID" value="CAL18904.1"/>
    <property type="molecule type" value="Genomic_DNA"/>
</dbReference>
<dbReference type="EMBL" id="AE009952">
    <property type="protein sequence ID" value="AAM87545.1"/>
    <property type="molecule type" value="Genomic_DNA"/>
</dbReference>
<dbReference type="EMBL" id="AE017042">
    <property type="protein sequence ID" value="AAS60495.1"/>
    <property type="molecule type" value="Genomic_DNA"/>
</dbReference>
<dbReference type="PIR" id="AF0027">
    <property type="entry name" value="AF0027"/>
</dbReference>
<dbReference type="RefSeq" id="WP_002213329.1">
    <property type="nucleotide sequence ID" value="NZ_WUCM01000078.1"/>
</dbReference>
<dbReference type="RefSeq" id="YP_002345302.1">
    <property type="nucleotide sequence ID" value="NC_003143.1"/>
</dbReference>
<dbReference type="SMR" id="Q8ZJA0"/>
<dbReference type="STRING" id="214092.YPO0222"/>
<dbReference type="PaxDb" id="214092-YPO0222"/>
<dbReference type="DNASU" id="1148948"/>
<dbReference type="EnsemblBacteria" id="AAS60495">
    <property type="protein sequence ID" value="AAS60495"/>
    <property type="gene ID" value="YP_0219"/>
</dbReference>
<dbReference type="GeneID" id="96663184"/>
<dbReference type="KEGG" id="ype:YPO0222"/>
<dbReference type="KEGG" id="ypk:y4001"/>
<dbReference type="KEGG" id="ypm:YP_0219"/>
<dbReference type="PATRIC" id="fig|214092.21.peg.450"/>
<dbReference type="eggNOG" id="COG0094">
    <property type="taxonomic scope" value="Bacteria"/>
</dbReference>
<dbReference type="HOGENOM" id="CLU_061015_2_1_6"/>
<dbReference type="OMA" id="PIGCAVT"/>
<dbReference type="OrthoDB" id="9806626at2"/>
<dbReference type="Proteomes" id="UP000000815">
    <property type="component" value="Chromosome"/>
</dbReference>
<dbReference type="Proteomes" id="UP000001019">
    <property type="component" value="Chromosome"/>
</dbReference>
<dbReference type="Proteomes" id="UP000002490">
    <property type="component" value="Chromosome"/>
</dbReference>
<dbReference type="GO" id="GO:0022625">
    <property type="term" value="C:cytosolic large ribosomal subunit"/>
    <property type="evidence" value="ECO:0000318"/>
    <property type="project" value="GO_Central"/>
</dbReference>
<dbReference type="GO" id="GO:0003723">
    <property type="term" value="F:RNA binding"/>
    <property type="evidence" value="ECO:0000318"/>
    <property type="project" value="GO_Central"/>
</dbReference>
<dbReference type="GO" id="GO:0019843">
    <property type="term" value="F:rRNA binding"/>
    <property type="evidence" value="ECO:0007669"/>
    <property type="project" value="UniProtKB-UniRule"/>
</dbReference>
<dbReference type="GO" id="GO:0003735">
    <property type="term" value="F:structural constituent of ribosome"/>
    <property type="evidence" value="ECO:0000318"/>
    <property type="project" value="GO_Central"/>
</dbReference>
<dbReference type="GO" id="GO:0000049">
    <property type="term" value="F:tRNA binding"/>
    <property type="evidence" value="ECO:0007669"/>
    <property type="project" value="UniProtKB-UniRule"/>
</dbReference>
<dbReference type="GO" id="GO:0006412">
    <property type="term" value="P:translation"/>
    <property type="evidence" value="ECO:0000318"/>
    <property type="project" value="GO_Central"/>
</dbReference>
<dbReference type="FunFam" id="3.30.1440.10:FF:000001">
    <property type="entry name" value="50S ribosomal protein L5"/>
    <property type="match status" value="1"/>
</dbReference>
<dbReference type="Gene3D" id="3.30.1440.10">
    <property type="match status" value="1"/>
</dbReference>
<dbReference type="HAMAP" id="MF_01333_B">
    <property type="entry name" value="Ribosomal_uL5_B"/>
    <property type="match status" value="1"/>
</dbReference>
<dbReference type="InterPro" id="IPR002132">
    <property type="entry name" value="Ribosomal_uL5"/>
</dbReference>
<dbReference type="InterPro" id="IPR020930">
    <property type="entry name" value="Ribosomal_uL5_bac-type"/>
</dbReference>
<dbReference type="InterPro" id="IPR031309">
    <property type="entry name" value="Ribosomal_uL5_C"/>
</dbReference>
<dbReference type="InterPro" id="IPR022803">
    <property type="entry name" value="Ribosomal_uL5_dom_sf"/>
</dbReference>
<dbReference type="InterPro" id="IPR031310">
    <property type="entry name" value="Ribosomal_uL5_N"/>
</dbReference>
<dbReference type="NCBIfam" id="NF000585">
    <property type="entry name" value="PRK00010.1"/>
    <property type="match status" value="1"/>
</dbReference>
<dbReference type="PANTHER" id="PTHR11994">
    <property type="entry name" value="60S RIBOSOMAL PROTEIN L11-RELATED"/>
    <property type="match status" value="1"/>
</dbReference>
<dbReference type="Pfam" id="PF00281">
    <property type="entry name" value="Ribosomal_L5"/>
    <property type="match status" value="1"/>
</dbReference>
<dbReference type="Pfam" id="PF00673">
    <property type="entry name" value="Ribosomal_L5_C"/>
    <property type="match status" value="1"/>
</dbReference>
<dbReference type="PIRSF" id="PIRSF002161">
    <property type="entry name" value="Ribosomal_L5"/>
    <property type="match status" value="1"/>
</dbReference>
<dbReference type="SUPFAM" id="SSF55282">
    <property type="entry name" value="RL5-like"/>
    <property type="match status" value="1"/>
</dbReference>
<name>RL5_YERPE</name>
<gene>
    <name evidence="1" type="primary">rplE</name>
    <name type="ordered locus">YPO0222</name>
    <name type="ordered locus">y4001</name>
    <name type="ordered locus">YP_0219</name>
</gene>
<comment type="function">
    <text evidence="1">This is one of the proteins that bind and probably mediate the attachment of the 5S RNA into the large ribosomal subunit, where it forms part of the central protuberance. In the 70S ribosome it contacts protein S13 of the 30S subunit (bridge B1b), connecting the 2 subunits; this bridge is implicated in subunit movement. Contacts the P site tRNA; the 5S rRNA and some of its associated proteins might help stabilize positioning of ribosome-bound tRNAs.</text>
</comment>
<comment type="subunit">
    <text evidence="1">Part of the 50S ribosomal subunit; part of the 5S rRNA/L5/L18/L25 subcomplex. Contacts the 5S rRNA and the P site tRNA. Forms a bridge to the 30S subunit in the 70S ribosome.</text>
</comment>
<comment type="similarity">
    <text evidence="1">Belongs to the universal ribosomal protein uL5 family.</text>
</comment>
<accession>Q8ZJA0</accession>
<accession>Q0WK86</accession>
<accession>Q74XY7</accession>
<accession>Q7CFT5</accession>
<organism>
    <name type="scientific">Yersinia pestis</name>
    <dbReference type="NCBI Taxonomy" id="632"/>
    <lineage>
        <taxon>Bacteria</taxon>
        <taxon>Pseudomonadati</taxon>
        <taxon>Pseudomonadota</taxon>
        <taxon>Gammaproteobacteria</taxon>
        <taxon>Enterobacterales</taxon>
        <taxon>Yersiniaceae</taxon>
        <taxon>Yersinia</taxon>
    </lineage>
</organism>